<sequence>MQGRLSAWLVKHGLVHRSLGFDYQGIETLQIKPEDWHSIAVILYVYGYNYLRSQCAYDVAPGGLLASVYHLTRIEYGVDQPEEVCIKVFASRRNPRIPSVFWVWKSADFQERESYDMLGISYDNHPRLKRILMPESWIGWPLRKDYIAPNFYEIQDAH</sequence>
<evidence type="ECO:0000255" key="1">
    <source>
        <dbReference type="HAMAP-Rule" id="MF_01357"/>
    </source>
</evidence>
<keyword id="KW-0150">Chloroplast</keyword>
<keyword id="KW-0472">Membrane</keyword>
<keyword id="KW-0520">NAD</keyword>
<keyword id="KW-0521">NADP</keyword>
<keyword id="KW-0934">Plastid</keyword>
<keyword id="KW-0618">Plastoquinone</keyword>
<keyword id="KW-0874">Quinone</keyword>
<keyword id="KW-1185">Reference proteome</keyword>
<keyword id="KW-0793">Thylakoid</keyword>
<keyword id="KW-1278">Translocase</keyword>
<keyword id="KW-0813">Transport</keyword>
<accession>Q0ZJ17</accession>
<comment type="function">
    <text evidence="1">NDH shuttles electrons from NAD(P)H:plastoquinone, via FMN and iron-sulfur (Fe-S) centers, to quinones in the photosynthetic chain and possibly in a chloroplast respiratory chain. The immediate electron acceptor for the enzyme in this species is believed to be plastoquinone. Couples the redox reaction to proton translocation, and thus conserves the redox energy in a proton gradient.</text>
</comment>
<comment type="catalytic activity">
    <reaction evidence="1">
        <text>a plastoquinone + NADH + (n+1) H(+)(in) = a plastoquinol + NAD(+) + n H(+)(out)</text>
        <dbReference type="Rhea" id="RHEA:42608"/>
        <dbReference type="Rhea" id="RHEA-COMP:9561"/>
        <dbReference type="Rhea" id="RHEA-COMP:9562"/>
        <dbReference type="ChEBI" id="CHEBI:15378"/>
        <dbReference type="ChEBI" id="CHEBI:17757"/>
        <dbReference type="ChEBI" id="CHEBI:57540"/>
        <dbReference type="ChEBI" id="CHEBI:57945"/>
        <dbReference type="ChEBI" id="CHEBI:62192"/>
    </reaction>
</comment>
<comment type="catalytic activity">
    <reaction evidence="1">
        <text>a plastoquinone + NADPH + (n+1) H(+)(in) = a plastoquinol + NADP(+) + n H(+)(out)</text>
        <dbReference type="Rhea" id="RHEA:42612"/>
        <dbReference type="Rhea" id="RHEA-COMP:9561"/>
        <dbReference type="Rhea" id="RHEA-COMP:9562"/>
        <dbReference type="ChEBI" id="CHEBI:15378"/>
        <dbReference type="ChEBI" id="CHEBI:17757"/>
        <dbReference type="ChEBI" id="CHEBI:57783"/>
        <dbReference type="ChEBI" id="CHEBI:58349"/>
        <dbReference type="ChEBI" id="CHEBI:62192"/>
    </reaction>
</comment>
<comment type="subunit">
    <text evidence="1">NDH is composed of at least 16 different subunits, 5 of which are encoded in the nucleus.</text>
</comment>
<comment type="subcellular location">
    <subcellularLocation>
        <location evidence="1">Plastid</location>
        <location evidence="1">Chloroplast thylakoid membrane</location>
        <topology evidence="1">Peripheral membrane protein</topology>
        <orientation evidence="1">Stromal side</orientation>
    </subcellularLocation>
</comment>
<comment type="similarity">
    <text evidence="1">Belongs to the complex I 30 kDa subunit family.</text>
</comment>
<name>NDHJ_VITVI</name>
<gene>
    <name evidence="1" type="primary">ndhJ</name>
    <name type="ORF">VITISV_029212</name>
</gene>
<dbReference type="EC" id="7.1.1.-" evidence="1"/>
<dbReference type="EMBL" id="DQ424856">
    <property type="protein sequence ID" value="ABE47537.1"/>
    <property type="molecule type" value="Genomic_DNA"/>
</dbReference>
<dbReference type="EMBL" id="AM436190">
    <property type="protein sequence ID" value="CAN73814.1"/>
    <property type="molecule type" value="Genomic_DNA"/>
</dbReference>
<dbReference type="RefSeq" id="YP_567079.1">
    <property type="nucleotide sequence ID" value="NC_007957.1"/>
</dbReference>
<dbReference type="SMR" id="Q0ZJ17"/>
<dbReference type="FunCoup" id="Q0ZJ17">
    <property type="interactions" value="37"/>
</dbReference>
<dbReference type="STRING" id="29760.Q0ZJ17"/>
<dbReference type="GeneID" id="4025141"/>
<dbReference type="KEGG" id="vvi:4025141"/>
<dbReference type="InParanoid" id="Q0ZJ17"/>
<dbReference type="OrthoDB" id="781770at71240"/>
<dbReference type="Proteomes" id="UP000009183">
    <property type="component" value="Chloroplast"/>
</dbReference>
<dbReference type="GO" id="GO:0009535">
    <property type="term" value="C:chloroplast thylakoid membrane"/>
    <property type="evidence" value="ECO:0007669"/>
    <property type="project" value="UniProtKB-SubCell"/>
</dbReference>
<dbReference type="GO" id="GO:0008137">
    <property type="term" value="F:NADH dehydrogenase (ubiquinone) activity"/>
    <property type="evidence" value="ECO:0007669"/>
    <property type="project" value="InterPro"/>
</dbReference>
<dbReference type="GO" id="GO:0048038">
    <property type="term" value="F:quinone binding"/>
    <property type="evidence" value="ECO:0007669"/>
    <property type="project" value="UniProtKB-KW"/>
</dbReference>
<dbReference type="GO" id="GO:0019684">
    <property type="term" value="P:photosynthesis, light reaction"/>
    <property type="evidence" value="ECO:0007669"/>
    <property type="project" value="UniProtKB-UniRule"/>
</dbReference>
<dbReference type="FunFam" id="3.30.460.80:FF:000004">
    <property type="entry name" value="NAD(P)H-quinone oxidoreductase subunit J, chloroplastic"/>
    <property type="match status" value="1"/>
</dbReference>
<dbReference type="Gene3D" id="3.30.460.80">
    <property type="entry name" value="NADH:ubiquinone oxidoreductase, 30kDa subunit"/>
    <property type="match status" value="1"/>
</dbReference>
<dbReference type="HAMAP" id="MF_01357">
    <property type="entry name" value="NDH1_NuoC"/>
    <property type="match status" value="1"/>
</dbReference>
<dbReference type="InterPro" id="IPR010218">
    <property type="entry name" value="NADH_DH_suC"/>
</dbReference>
<dbReference type="InterPro" id="IPR037232">
    <property type="entry name" value="NADH_quin_OxRdtase_su_C/D-like"/>
</dbReference>
<dbReference type="InterPro" id="IPR001268">
    <property type="entry name" value="NADH_UbQ_OxRdtase_30kDa_su"/>
</dbReference>
<dbReference type="InterPro" id="IPR020396">
    <property type="entry name" value="NADH_UbQ_OxRdtase_CS"/>
</dbReference>
<dbReference type="NCBIfam" id="NF009141">
    <property type="entry name" value="PRK12494.1"/>
    <property type="match status" value="1"/>
</dbReference>
<dbReference type="PANTHER" id="PTHR10884:SF14">
    <property type="entry name" value="NADH DEHYDROGENASE [UBIQUINONE] IRON-SULFUR PROTEIN 3, MITOCHONDRIAL"/>
    <property type="match status" value="1"/>
</dbReference>
<dbReference type="PANTHER" id="PTHR10884">
    <property type="entry name" value="NADH DEHYDROGENASE UBIQUINONE IRON-SULFUR PROTEIN 3"/>
    <property type="match status" value="1"/>
</dbReference>
<dbReference type="Pfam" id="PF00329">
    <property type="entry name" value="Complex1_30kDa"/>
    <property type="match status" value="1"/>
</dbReference>
<dbReference type="SUPFAM" id="SSF143243">
    <property type="entry name" value="Nqo5-like"/>
    <property type="match status" value="1"/>
</dbReference>
<dbReference type="PROSITE" id="PS00542">
    <property type="entry name" value="COMPLEX1_30K"/>
    <property type="match status" value="1"/>
</dbReference>
<geneLocation type="chloroplast"/>
<proteinExistence type="inferred from homology"/>
<organism>
    <name type="scientific">Vitis vinifera</name>
    <name type="common">Grape</name>
    <dbReference type="NCBI Taxonomy" id="29760"/>
    <lineage>
        <taxon>Eukaryota</taxon>
        <taxon>Viridiplantae</taxon>
        <taxon>Streptophyta</taxon>
        <taxon>Embryophyta</taxon>
        <taxon>Tracheophyta</taxon>
        <taxon>Spermatophyta</taxon>
        <taxon>Magnoliopsida</taxon>
        <taxon>eudicotyledons</taxon>
        <taxon>Gunneridae</taxon>
        <taxon>Pentapetalae</taxon>
        <taxon>rosids</taxon>
        <taxon>Vitales</taxon>
        <taxon>Vitaceae</taxon>
        <taxon>Viteae</taxon>
        <taxon>Vitis</taxon>
    </lineage>
</organism>
<feature type="chain" id="PRO_0000358308" description="NAD(P)H-quinone oxidoreductase subunit J, chloroplastic">
    <location>
        <begin position="1"/>
        <end position="158"/>
    </location>
</feature>
<reference key="1">
    <citation type="journal article" date="2006" name="BMC Evol. Biol.">
        <title>Phylogenetic analyses of Vitis (Vitaceae) based on complete chloroplast genome sequences: effects of taxon sampling and phylogenetic methods on resolving relationships among rosids.</title>
        <authorList>
            <person name="Jansen R.K."/>
            <person name="Kaittanis C."/>
            <person name="Lee S.-B."/>
            <person name="Saski C."/>
            <person name="Tomkins J."/>
            <person name="Alverson A.J."/>
            <person name="Daniell H."/>
        </authorList>
    </citation>
    <scope>NUCLEOTIDE SEQUENCE [LARGE SCALE GENOMIC DNA]</scope>
    <source>
        <strain>cv. Maxxa</strain>
    </source>
</reference>
<reference key="2">
    <citation type="journal article" date="2007" name="PLoS ONE">
        <title>A high quality draft consensus sequence of the genome of a heterozygous grapevine variety.</title>
        <authorList>
            <person name="Velasco R."/>
            <person name="Zharkikh A."/>
            <person name="Troggio M."/>
            <person name="Cartwright D.A."/>
            <person name="Cestaro A."/>
            <person name="Pruss D."/>
            <person name="Pindo M."/>
            <person name="FitzGerald L.M."/>
            <person name="Vezzulli S."/>
            <person name="Reid J."/>
            <person name="Malacarne G."/>
            <person name="Iliev D."/>
            <person name="Coppola G."/>
            <person name="Wardell B."/>
            <person name="Micheletti D."/>
            <person name="Macalma T."/>
            <person name="Facci M."/>
            <person name="Mitchell J.T."/>
            <person name="Perazzolli M."/>
            <person name="Eldredge G."/>
            <person name="Gatto P."/>
            <person name="Oyzerski R."/>
            <person name="Moretto M."/>
            <person name="Gutin N."/>
            <person name="Stefanini M."/>
            <person name="Chen Y."/>
            <person name="Segala C."/>
            <person name="Davenport C."/>
            <person name="Dematte L."/>
            <person name="Mraz A."/>
            <person name="Battilana J."/>
            <person name="Stormo K."/>
            <person name="Costa F."/>
            <person name="Tao Q."/>
            <person name="Si-Ammour A."/>
            <person name="Harkins T."/>
            <person name="Lackey A."/>
            <person name="Perbost C."/>
            <person name="Taillon B."/>
            <person name="Stella A."/>
            <person name="Solovyev V."/>
            <person name="Fawcett J.A."/>
            <person name="Sterck L."/>
            <person name="Vandepoele K."/>
            <person name="Grando S.M."/>
            <person name="Toppo S."/>
            <person name="Moser C."/>
            <person name="Lanchbury J."/>
            <person name="Bogden R."/>
            <person name="Skolnick M."/>
            <person name="Sgaramella V."/>
            <person name="Bhatnagar S.K."/>
            <person name="Fontana P."/>
            <person name="Gutin A."/>
            <person name="Van de Peer Y."/>
            <person name="Salamini F."/>
            <person name="Viola R."/>
        </authorList>
    </citation>
    <scope>NUCLEOTIDE SEQUENCE [LARGE SCALE GENOMIC DNA]</scope>
    <source>
        <strain>cv. Pinot noir</strain>
    </source>
</reference>
<protein>
    <recommendedName>
        <fullName evidence="1">NAD(P)H-quinone oxidoreductase subunit J, chloroplastic</fullName>
        <ecNumber evidence="1">7.1.1.-</ecNumber>
    </recommendedName>
    <alternativeName>
        <fullName>NAD(P)H dehydrogenase subunit J</fullName>
    </alternativeName>
    <alternativeName>
        <fullName evidence="1">NADH-plastoquinone oxidoreductase subunit J</fullName>
    </alternativeName>
</protein>